<keyword id="KW-0030">Aminoacyl-tRNA synthetase</keyword>
<keyword id="KW-0067">ATP-binding</keyword>
<keyword id="KW-0963">Cytoplasm</keyword>
<keyword id="KW-0436">Ligase</keyword>
<keyword id="KW-0547">Nucleotide-binding</keyword>
<keyword id="KW-0648">Protein biosynthesis</keyword>
<dbReference type="EC" id="6.1.1.17" evidence="1"/>
<dbReference type="EMBL" id="AM260522">
    <property type="protein sequence ID" value="CAJ99857.1"/>
    <property type="molecule type" value="Genomic_DNA"/>
</dbReference>
<dbReference type="RefSeq" id="WP_011577964.1">
    <property type="nucleotide sequence ID" value="NC_008229.1"/>
</dbReference>
<dbReference type="SMR" id="Q17WW9"/>
<dbReference type="STRING" id="382638.Hac_1093"/>
<dbReference type="GeneID" id="31758454"/>
<dbReference type="KEGG" id="hac:Hac_1093"/>
<dbReference type="eggNOG" id="COG0008">
    <property type="taxonomic scope" value="Bacteria"/>
</dbReference>
<dbReference type="HOGENOM" id="CLU_015768_6_3_7"/>
<dbReference type="OrthoDB" id="9807503at2"/>
<dbReference type="BioCyc" id="HACI382638:HAC_RS04695-MONOMER"/>
<dbReference type="Proteomes" id="UP000000775">
    <property type="component" value="Chromosome"/>
</dbReference>
<dbReference type="GO" id="GO:0005829">
    <property type="term" value="C:cytosol"/>
    <property type="evidence" value="ECO:0007669"/>
    <property type="project" value="TreeGrafter"/>
</dbReference>
<dbReference type="GO" id="GO:0005524">
    <property type="term" value="F:ATP binding"/>
    <property type="evidence" value="ECO:0007669"/>
    <property type="project" value="UniProtKB-UniRule"/>
</dbReference>
<dbReference type="GO" id="GO:0004818">
    <property type="term" value="F:glutamate-tRNA ligase activity"/>
    <property type="evidence" value="ECO:0007669"/>
    <property type="project" value="UniProtKB-UniRule"/>
</dbReference>
<dbReference type="GO" id="GO:0000049">
    <property type="term" value="F:tRNA binding"/>
    <property type="evidence" value="ECO:0007669"/>
    <property type="project" value="InterPro"/>
</dbReference>
<dbReference type="GO" id="GO:0008270">
    <property type="term" value="F:zinc ion binding"/>
    <property type="evidence" value="ECO:0007669"/>
    <property type="project" value="InterPro"/>
</dbReference>
<dbReference type="GO" id="GO:0006424">
    <property type="term" value="P:glutamyl-tRNA aminoacylation"/>
    <property type="evidence" value="ECO:0007669"/>
    <property type="project" value="UniProtKB-UniRule"/>
</dbReference>
<dbReference type="CDD" id="cd00808">
    <property type="entry name" value="GluRS_core"/>
    <property type="match status" value="1"/>
</dbReference>
<dbReference type="FunFam" id="3.40.50.620:FF:000288">
    <property type="entry name" value="Glutamate--tRNA ligase 1"/>
    <property type="match status" value="1"/>
</dbReference>
<dbReference type="Gene3D" id="1.10.10.350">
    <property type="match status" value="1"/>
</dbReference>
<dbReference type="Gene3D" id="3.40.50.620">
    <property type="entry name" value="HUPs"/>
    <property type="match status" value="1"/>
</dbReference>
<dbReference type="HAMAP" id="MF_00022">
    <property type="entry name" value="Glu_tRNA_synth_type1"/>
    <property type="match status" value="1"/>
</dbReference>
<dbReference type="InterPro" id="IPR045462">
    <property type="entry name" value="aa-tRNA-synth_I_cd-bd"/>
</dbReference>
<dbReference type="InterPro" id="IPR020751">
    <property type="entry name" value="aa-tRNA-synth_I_codon-bd_sub2"/>
</dbReference>
<dbReference type="InterPro" id="IPR001412">
    <property type="entry name" value="aa-tRNA-synth_I_CS"/>
</dbReference>
<dbReference type="InterPro" id="IPR008925">
    <property type="entry name" value="aa_tRNA-synth_I_cd-bd_sf"/>
</dbReference>
<dbReference type="InterPro" id="IPR004527">
    <property type="entry name" value="Glu-tRNA-ligase_bac/mito"/>
</dbReference>
<dbReference type="InterPro" id="IPR000924">
    <property type="entry name" value="Glu/Gln-tRNA-synth"/>
</dbReference>
<dbReference type="InterPro" id="IPR020058">
    <property type="entry name" value="Glu/Gln-tRNA-synth_Ib_cat-dom"/>
</dbReference>
<dbReference type="InterPro" id="IPR049940">
    <property type="entry name" value="GluQ/Sye"/>
</dbReference>
<dbReference type="InterPro" id="IPR033910">
    <property type="entry name" value="GluRS_core"/>
</dbReference>
<dbReference type="InterPro" id="IPR014729">
    <property type="entry name" value="Rossmann-like_a/b/a_fold"/>
</dbReference>
<dbReference type="NCBIfam" id="TIGR00464">
    <property type="entry name" value="gltX_bact"/>
    <property type="match status" value="1"/>
</dbReference>
<dbReference type="PANTHER" id="PTHR43311">
    <property type="entry name" value="GLUTAMATE--TRNA LIGASE"/>
    <property type="match status" value="1"/>
</dbReference>
<dbReference type="PANTHER" id="PTHR43311:SF2">
    <property type="entry name" value="GLUTAMATE--TRNA LIGASE, MITOCHONDRIAL-RELATED"/>
    <property type="match status" value="1"/>
</dbReference>
<dbReference type="Pfam" id="PF19269">
    <property type="entry name" value="Anticodon_2"/>
    <property type="match status" value="1"/>
</dbReference>
<dbReference type="Pfam" id="PF00749">
    <property type="entry name" value="tRNA-synt_1c"/>
    <property type="match status" value="1"/>
</dbReference>
<dbReference type="PRINTS" id="PR00987">
    <property type="entry name" value="TRNASYNTHGLU"/>
</dbReference>
<dbReference type="SUPFAM" id="SSF48163">
    <property type="entry name" value="An anticodon-binding domain of class I aminoacyl-tRNA synthetases"/>
    <property type="match status" value="1"/>
</dbReference>
<dbReference type="SUPFAM" id="SSF52374">
    <property type="entry name" value="Nucleotidylyl transferase"/>
    <property type="match status" value="1"/>
</dbReference>
<dbReference type="PROSITE" id="PS00178">
    <property type="entry name" value="AA_TRNA_LIGASE_I"/>
    <property type="match status" value="1"/>
</dbReference>
<gene>
    <name evidence="1" type="primary">gltX2</name>
    <name type="ordered locus">Hac_1093</name>
</gene>
<comment type="function">
    <text evidence="1">Catalyzes the attachment of glutamate to tRNA(Glu) in a two-step reaction: glutamate is first activated by ATP to form Glu-AMP and then transferred to the acceptor end of tRNA(Glu).</text>
</comment>
<comment type="catalytic activity">
    <reaction evidence="1">
        <text>tRNA(Glu) + L-glutamate + ATP = L-glutamyl-tRNA(Glu) + AMP + diphosphate</text>
        <dbReference type="Rhea" id="RHEA:23540"/>
        <dbReference type="Rhea" id="RHEA-COMP:9663"/>
        <dbReference type="Rhea" id="RHEA-COMP:9680"/>
        <dbReference type="ChEBI" id="CHEBI:29985"/>
        <dbReference type="ChEBI" id="CHEBI:30616"/>
        <dbReference type="ChEBI" id="CHEBI:33019"/>
        <dbReference type="ChEBI" id="CHEBI:78442"/>
        <dbReference type="ChEBI" id="CHEBI:78520"/>
        <dbReference type="ChEBI" id="CHEBI:456215"/>
        <dbReference type="EC" id="6.1.1.17"/>
    </reaction>
</comment>
<comment type="subunit">
    <text evidence="1">Monomer.</text>
</comment>
<comment type="subcellular location">
    <subcellularLocation>
        <location evidence="1">Cytoplasm</location>
    </subcellularLocation>
</comment>
<comment type="similarity">
    <text evidence="1">Belongs to the class-I aminoacyl-tRNA synthetase family. Glutamate--tRNA ligase type 1 subfamily.</text>
</comment>
<organism>
    <name type="scientific">Helicobacter acinonychis (strain Sheeba)</name>
    <dbReference type="NCBI Taxonomy" id="382638"/>
    <lineage>
        <taxon>Bacteria</taxon>
        <taxon>Pseudomonadati</taxon>
        <taxon>Campylobacterota</taxon>
        <taxon>Epsilonproteobacteria</taxon>
        <taxon>Campylobacterales</taxon>
        <taxon>Helicobacteraceae</taxon>
        <taxon>Helicobacter</taxon>
    </lineage>
</organism>
<accession>Q17WW9</accession>
<protein>
    <recommendedName>
        <fullName evidence="1">Glutamate--tRNA ligase 2</fullName>
        <ecNumber evidence="1">6.1.1.17</ecNumber>
    </recommendedName>
    <alternativeName>
        <fullName evidence="1">Glutamyl-tRNA synthetase 2</fullName>
        <shortName evidence="1">GluRS 2</shortName>
    </alternativeName>
</protein>
<sequence>MSLIATRFAPSPTGYLHIGGLRTAIFNYLFARANQGKFFLRIEDTDLSRNSIEAANAIIEAFKWVGLEYDGEILYQSKRFEIYKECIQKLLNEDKAYYCYMSKDELDALREKQKVRKETPRYDNRYRDFKGTPPKGIEPVVRIKIPQNELICFNDGIKGEVRVNTNELDDFIIARSDGTPTYNFVVTIDDALMGITDVIRGDDHLSNTPKQIVLYKALNFKIPNFFHVPMILNEEGQKLSKRHGATNVMDYQEMGYLKEALINFLARLGWSYRDKEIFSMQELLELFDPKDLNSSPSCFSWHKLNWLNAHYLKTQSTQELLKLLKPFNFSDLSHLNPTQLDRLFDALKERSQTLKELALKIDEVLIAPIEYEEKVLKKLDQVLVTPLLEKFKLELNQADFNDENALENAIHKIIEEEKIKVGSFMQPLRLALLGKGGGIGLKEVLFILGKTESIKRIEKFLKN</sequence>
<reference key="1">
    <citation type="journal article" date="2006" name="PLoS Genet.">
        <title>Who ate whom? Adaptive Helicobacter genomic changes that accompanied a host jump from early humans to large felines.</title>
        <authorList>
            <person name="Eppinger M."/>
            <person name="Baar C."/>
            <person name="Linz B."/>
            <person name="Raddatz G."/>
            <person name="Lanz C."/>
            <person name="Keller H."/>
            <person name="Morelli G."/>
            <person name="Gressmann H."/>
            <person name="Achtman M."/>
            <person name="Schuster S.C."/>
        </authorList>
    </citation>
    <scope>NUCLEOTIDE SEQUENCE [LARGE SCALE GENOMIC DNA]</scope>
    <source>
        <strain>Sheeba</strain>
    </source>
</reference>
<name>SYE2_HELAH</name>
<evidence type="ECO:0000255" key="1">
    <source>
        <dbReference type="HAMAP-Rule" id="MF_00022"/>
    </source>
</evidence>
<proteinExistence type="inferred from homology"/>
<feature type="chain" id="PRO_1000057195" description="Glutamate--tRNA ligase 2">
    <location>
        <begin position="1"/>
        <end position="463"/>
    </location>
</feature>
<feature type="short sequence motif" description="'HIGH' region" evidence="1">
    <location>
        <begin position="10"/>
        <end position="20"/>
    </location>
</feature>
<feature type="short sequence motif" description="'KMSKS' region" evidence="1">
    <location>
        <begin position="238"/>
        <end position="242"/>
    </location>
</feature>
<feature type="binding site" evidence="1">
    <location>
        <position position="241"/>
    </location>
    <ligand>
        <name>ATP</name>
        <dbReference type="ChEBI" id="CHEBI:30616"/>
    </ligand>
</feature>